<sequence length="458" mass="47912">MAVLNPMTLGIYLQLFFCSIVSQPTFINSVLPISAALPGLDQKKRGNHKACCLLMPPPPPLFPPPFFRGSRSPLLSPDMKNLLELEASPSPCMQGSLGSPGPPGPQGPPGLPGKAGPKGEKGDLGRPGRKGRPGPPGVPGEPGPVGWPGPEGPRGEKGDVGMMGLPGSRGPMGSKGFPGSRGEKGSRGERGDLGPKGEKGFPGFPGMLGQKGEMGPKGESGIAGHRGPTGRPGKRGKQGQKGDSGIMGPPGKPGPSGQPGRQGPPGPPGPPSAGQLVMGLKGERGFPGPPGRCLCGPPANVNNPSYGDPMYGRGSPRVPAIFVVNNQEELEKLNTQNAIAFRRDQRSLYFKDSLGWLPIQLTPFYPVGLHHKAAWHLCGDGVLQPGEECDDGNPDVSDGCIDCHRAYCGDGYRHRGVEDCDGSDFGYLKCETYLPGSYGELRCTQYCSIDSTPCRYFT</sequence>
<protein>
    <recommendedName>
        <fullName>Acetylcholinesterase collagenic tail peptide</fullName>
    </recommendedName>
    <alternativeName>
        <fullName>AChE Q subunit</fullName>
    </alternativeName>
    <alternativeName>
        <fullName>Acetylcholinesterase-associated collagen</fullName>
    </alternativeName>
</protein>
<proteinExistence type="evidence at transcript level"/>
<gene>
    <name type="primary">Colq</name>
</gene>
<keyword id="KW-0025">Alternative splicing</keyword>
<keyword id="KW-0176">Collagen</keyword>
<keyword id="KW-1015">Disulfide bond</keyword>
<keyword id="KW-0531">Neurotransmitter degradation</keyword>
<keyword id="KW-1185">Reference proteome</keyword>
<keyword id="KW-0677">Repeat</keyword>
<keyword id="KW-0732">Signal</keyword>
<keyword id="KW-0770">Synapse</keyword>
<feature type="signal peptide" evidence="2">
    <location>
        <begin position="1"/>
        <end position="22"/>
    </location>
</feature>
<feature type="chain" id="PRO_0000005855" description="Acetylcholinesterase collagenic tail peptide">
    <location>
        <begin position="23"/>
        <end position="458"/>
    </location>
</feature>
<feature type="domain" description="Collagen-like 1">
    <location>
        <begin position="95"/>
        <end position="271"/>
    </location>
</feature>
<feature type="domain" description="Collagen-like 2">
    <location>
        <begin position="279"/>
        <end position="293"/>
    </location>
</feature>
<feature type="region of interest" description="PRAD">
    <location>
        <begin position="51"/>
        <end position="67"/>
    </location>
</feature>
<feature type="region of interest" description="Disordered" evidence="3">
    <location>
        <begin position="89"/>
        <end position="291"/>
    </location>
</feature>
<feature type="region of interest" description="Heparan sulfate proteoglycan binding" evidence="2">
    <location>
        <begin position="129"/>
        <end position="132"/>
    </location>
</feature>
<feature type="region of interest" description="Heparan sulfate proteoglycan binding" evidence="2">
    <location>
        <begin position="234"/>
        <end position="237"/>
    </location>
</feature>
<feature type="compositionally biased region" description="Pro residues" evidence="3">
    <location>
        <begin position="100"/>
        <end position="111"/>
    </location>
</feature>
<feature type="compositionally biased region" description="Basic and acidic residues" evidence="3">
    <location>
        <begin position="117"/>
        <end position="126"/>
    </location>
</feature>
<feature type="compositionally biased region" description="Pro residues" evidence="3">
    <location>
        <begin position="133"/>
        <end position="151"/>
    </location>
</feature>
<feature type="compositionally biased region" description="Basic and acidic residues" evidence="3">
    <location>
        <begin position="181"/>
        <end position="199"/>
    </location>
</feature>
<feature type="compositionally biased region" description="Pro residues" evidence="3">
    <location>
        <begin position="262"/>
        <end position="271"/>
    </location>
</feature>
<feature type="disulfide bond" description="Interchain (with T subunit)" evidence="2">
    <location>
        <position position="51"/>
    </location>
</feature>
<feature type="disulfide bond" description="Interchain (with T subunit)" evidence="2">
    <location>
        <position position="52"/>
    </location>
</feature>
<feature type="disulfide bond" description="Interchain" evidence="2">
    <location>
        <position position="92"/>
    </location>
</feature>
<feature type="disulfide bond" description="Interchain" evidence="2">
    <location>
        <position position="293"/>
    </location>
</feature>
<feature type="disulfide bond" description="Interchain" evidence="2">
    <location>
        <position position="295"/>
    </location>
</feature>
<feature type="splice variant" id="VSP_001185" description="In isoform Short." evidence="4">
    <original>LLSPDMKN</original>
    <variation>VSTPDLGE</variation>
    <location>
        <begin position="74"/>
        <end position="81"/>
    </location>
</feature>
<feature type="splice variant" id="VSP_001186" description="In isoform Short." evidence="4">
    <location>
        <begin position="82"/>
        <end position="458"/>
    </location>
</feature>
<comment type="function">
    <text evidence="1">Anchors the catalytic subunits of asymmetric AChE to the synaptic basal lamina.</text>
</comment>
<comment type="subunit">
    <text>Homotrimer. Component of the asymmetric form of AChE, a disulfide-bonded oligomer composed of the collagenic subunits (Q) and a variable number of asymmetric catalytic subunits (T). The N-terminal of a collagenic subunit (Q) associates with the C-terminal of a catalytic subunit (T).</text>
</comment>
<comment type="subcellular location">
    <subcellularLocation>
        <location evidence="1">Synapse</location>
    </subcellularLocation>
</comment>
<comment type="alternative products">
    <event type="alternative splicing"/>
    <isoform>
        <id>O35167-1</id>
        <name>Long</name>
        <sequence type="displayed"/>
    </isoform>
    <isoform>
        <id>O35167-2</id>
        <name>Short</name>
        <sequence type="described" ref="VSP_001185 VSP_001186"/>
    </isoform>
</comment>
<comment type="tissue specificity">
    <text>Expressed in skeletal muscle, heart, brain, as well as in lung, spleen, testis, but not liver. The short isoform represents about 5% of the transcripts in the soleus muscle and about 15% in the heart ventricle.</text>
</comment>
<comment type="domain">
    <text evidence="1">The proline-rich attachment domain (PRAD) binds the AChE catalytic subunits.</text>
</comment>
<comment type="PTM">
    <text>The triple-helical tail is stabilized by disulfide bonds at each end.</text>
</comment>
<comment type="similarity">
    <text evidence="4">Belongs to the COLQ family.</text>
</comment>
<accession>O35167</accession>
<dbReference type="EMBL" id="AF007583">
    <property type="protein sequence ID" value="AAB81717.1"/>
    <property type="molecule type" value="mRNA"/>
</dbReference>
<dbReference type="RefSeq" id="NP_062147.1">
    <property type="nucleotide sequence ID" value="NM_019274.2"/>
</dbReference>
<dbReference type="CORUM" id="O35167"/>
<dbReference type="FunCoup" id="O35167">
    <property type="interactions" value="6"/>
</dbReference>
<dbReference type="STRING" id="10116.ENSRNOP00000026550"/>
<dbReference type="PhosphoSitePlus" id="O35167"/>
<dbReference type="PaxDb" id="10116-ENSRNOP00000026550"/>
<dbReference type="GeneID" id="29755"/>
<dbReference type="KEGG" id="rno:29755"/>
<dbReference type="UCSC" id="RGD:2377">
    <molecule id="O35167-1"/>
    <property type="organism name" value="rat"/>
</dbReference>
<dbReference type="AGR" id="RGD:2377"/>
<dbReference type="CTD" id="8292"/>
<dbReference type="RGD" id="2377">
    <property type="gene designation" value="Colq"/>
</dbReference>
<dbReference type="eggNOG" id="KOG3544">
    <property type="taxonomic scope" value="Eukaryota"/>
</dbReference>
<dbReference type="InParanoid" id="O35167"/>
<dbReference type="PhylomeDB" id="O35167"/>
<dbReference type="PRO" id="PR:O35167"/>
<dbReference type="Proteomes" id="UP000002494">
    <property type="component" value="Unplaced"/>
</dbReference>
<dbReference type="GO" id="GO:0005604">
    <property type="term" value="C:basement membrane"/>
    <property type="evidence" value="ECO:0000304"/>
    <property type="project" value="RGD"/>
</dbReference>
<dbReference type="GO" id="GO:0005581">
    <property type="term" value="C:collagen trimer"/>
    <property type="evidence" value="ECO:0007669"/>
    <property type="project" value="UniProtKB-KW"/>
</dbReference>
<dbReference type="GO" id="GO:0062023">
    <property type="term" value="C:collagen-containing extracellular matrix"/>
    <property type="evidence" value="ECO:0000318"/>
    <property type="project" value="GO_Central"/>
</dbReference>
<dbReference type="GO" id="GO:0005615">
    <property type="term" value="C:extracellular space"/>
    <property type="evidence" value="ECO:0000318"/>
    <property type="project" value="GO_Central"/>
</dbReference>
<dbReference type="GO" id="GO:0031594">
    <property type="term" value="C:neuromuscular junction"/>
    <property type="evidence" value="ECO:0000266"/>
    <property type="project" value="RGD"/>
</dbReference>
<dbReference type="GO" id="GO:0005886">
    <property type="term" value="C:plasma membrane"/>
    <property type="evidence" value="ECO:0007669"/>
    <property type="project" value="GOC"/>
</dbReference>
<dbReference type="GO" id="GO:0030020">
    <property type="term" value="F:extracellular matrix structural constituent conferring tensile strength"/>
    <property type="evidence" value="ECO:0000318"/>
    <property type="project" value="GO_Central"/>
</dbReference>
<dbReference type="GO" id="GO:0008201">
    <property type="term" value="F:heparin binding"/>
    <property type="evidence" value="ECO:0000314"/>
    <property type="project" value="RGD"/>
</dbReference>
<dbReference type="GO" id="GO:0005198">
    <property type="term" value="F:structural molecule activity"/>
    <property type="evidence" value="ECO:0000304"/>
    <property type="project" value="RGD"/>
</dbReference>
<dbReference type="GO" id="GO:0090150">
    <property type="term" value="P:establishment of protein localization to membrane"/>
    <property type="evidence" value="ECO:0000266"/>
    <property type="project" value="RGD"/>
</dbReference>
<dbReference type="GO" id="GO:0008582">
    <property type="term" value="P:regulation of synaptic assembly at neuromuscular junction"/>
    <property type="evidence" value="ECO:0000266"/>
    <property type="project" value="RGD"/>
</dbReference>
<dbReference type="GO" id="GO:0071340">
    <property type="term" value="P:skeletal muscle acetylcholine-gated channel clustering"/>
    <property type="evidence" value="ECO:0000266"/>
    <property type="project" value="RGD"/>
</dbReference>
<dbReference type="InterPro" id="IPR008160">
    <property type="entry name" value="Collagen"/>
</dbReference>
<dbReference type="InterPro" id="IPR050149">
    <property type="entry name" value="Collagen_superfamily"/>
</dbReference>
<dbReference type="InterPro" id="IPR011936">
    <property type="entry name" value="Myxo_disulph_rpt"/>
</dbReference>
<dbReference type="NCBIfam" id="TIGR02232">
    <property type="entry name" value="myxo_disulf_rpt"/>
    <property type="match status" value="1"/>
</dbReference>
<dbReference type="PANTHER" id="PTHR24023:SF861">
    <property type="entry name" value="ACETYLCHOLINESTERASE COLLAGENIC TAIL PEPTIDE"/>
    <property type="match status" value="1"/>
</dbReference>
<dbReference type="PANTHER" id="PTHR24023">
    <property type="entry name" value="COLLAGEN ALPHA"/>
    <property type="match status" value="1"/>
</dbReference>
<dbReference type="Pfam" id="PF01391">
    <property type="entry name" value="Collagen"/>
    <property type="match status" value="1"/>
</dbReference>
<name>COLQ_RAT</name>
<organism>
    <name type="scientific">Rattus norvegicus</name>
    <name type="common">Rat</name>
    <dbReference type="NCBI Taxonomy" id="10116"/>
    <lineage>
        <taxon>Eukaryota</taxon>
        <taxon>Metazoa</taxon>
        <taxon>Chordata</taxon>
        <taxon>Craniata</taxon>
        <taxon>Vertebrata</taxon>
        <taxon>Euteleostomi</taxon>
        <taxon>Mammalia</taxon>
        <taxon>Eutheria</taxon>
        <taxon>Euarchontoglires</taxon>
        <taxon>Glires</taxon>
        <taxon>Rodentia</taxon>
        <taxon>Myomorpha</taxon>
        <taxon>Muroidea</taxon>
        <taxon>Muridae</taxon>
        <taxon>Murinae</taxon>
        <taxon>Rattus</taxon>
    </lineage>
</organism>
<evidence type="ECO:0000250" key="1"/>
<evidence type="ECO:0000255" key="2"/>
<evidence type="ECO:0000256" key="3">
    <source>
        <dbReference type="SAM" id="MobiDB-lite"/>
    </source>
</evidence>
<evidence type="ECO:0000305" key="4"/>
<reference key="1">
    <citation type="journal article" date="1997" name="J. Biol. Chem.">
        <title>The mammalian gene of acetylcholinesterase-associated collagen.</title>
        <authorList>
            <person name="Krejci E."/>
            <person name="Thomine S."/>
            <person name="Boschetti N."/>
            <person name="Legay C."/>
            <person name="Sketelj J."/>
            <person name="Massoulie J."/>
        </authorList>
    </citation>
    <scope>NUCLEOTIDE SEQUENCE [MRNA]</scope>
    <scope>ALTERNATIVE SPLICING</scope>
    <source>
        <strain>Wistar</strain>
        <tissue>Soleus muscle</tissue>
    </source>
</reference>